<keyword id="KW-0021">Allosteric enzyme</keyword>
<keyword id="KW-0903">Direct protein sequencing</keyword>
<keyword id="KW-0597">Phosphoprotein</keyword>
<keyword id="KW-1185">Reference proteome</keyword>
<keyword id="KW-0808">Transferase</keyword>
<keyword id="KW-0816">Tricarboxylic acid cycle</keyword>
<feature type="chain" id="PRO_0000169929" description="Citrate synthase 2">
    <location>
        <begin position="1"/>
        <end position="372"/>
    </location>
</feature>
<feature type="active site" evidence="1">
    <location>
        <position position="257"/>
    </location>
</feature>
<feature type="active site" evidence="1">
    <location>
        <position position="308"/>
    </location>
</feature>
<feature type="modified residue" description="Phosphoserine" evidence="2">
    <location>
        <position position="284"/>
    </location>
</feature>
<feature type="sequence conflict" description="In Ref. 1; AAA96341." evidence="3" ref="1">
    <original>A</original>
    <variation>R</variation>
    <location>
        <position position="39"/>
    </location>
</feature>
<feature type="sequence conflict" description="In Ref. 1; AAA96341." evidence="3" ref="1">
    <original>KH</original>
    <variation>ND</variation>
    <location>
        <begin position="268"/>
        <end position="269"/>
    </location>
</feature>
<feature type="sequence conflict" description="In Ref. 1; AAA96341." evidence="3" ref="1">
    <original>S</original>
    <variation>R</variation>
    <location>
        <position position="332"/>
    </location>
</feature>
<gene>
    <name type="primary">citZ</name>
    <name type="synonym">citA2</name>
    <name type="ordered locus">BSU29140</name>
</gene>
<accession>P39120</accession>
<accession>O34435</accession>
<comment type="function">
    <text>Might regulate the synthesis and function of enzymes involved in later enzymatic steps of Krebs cycle. Loss in activity results in sporulation defect.</text>
</comment>
<comment type="catalytic activity">
    <reaction evidence="1">
        <text>oxaloacetate + acetyl-CoA + H2O = citrate + CoA + H(+)</text>
        <dbReference type="Rhea" id="RHEA:16845"/>
        <dbReference type="ChEBI" id="CHEBI:15377"/>
        <dbReference type="ChEBI" id="CHEBI:15378"/>
        <dbReference type="ChEBI" id="CHEBI:16452"/>
        <dbReference type="ChEBI" id="CHEBI:16947"/>
        <dbReference type="ChEBI" id="CHEBI:57287"/>
        <dbReference type="ChEBI" id="CHEBI:57288"/>
        <dbReference type="EC" id="2.3.3.16"/>
    </reaction>
</comment>
<comment type="pathway">
    <text>Carbohydrate metabolism; tricarboxylic acid cycle; isocitrate from oxaloacetate: step 1/2.</text>
</comment>
<comment type="subunit">
    <text evidence="3">Homodimer.</text>
</comment>
<comment type="induction">
    <text>By decoyinine and nutrient depletion.</text>
</comment>
<comment type="miscellaneous">
    <text>Citrate synthase is found in nearly all cells capable of oxidative metabolism.</text>
</comment>
<comment type="similarity">
    <text evidence="3">Belongs to the citrate synthase family.</text>
</comment>
<reference key="1">
    <citation type="journal article" date="1994" name="J. Bacteriol.">
        <title>Identification of two distinct Bacillus subtilis citrate synthase genes.</title>
        <authorList>
            <person name="Jin S."/>
            <person name="Sonenshein A.L."/>
        </authorList>
    </citation>
    <scope>NUCLEOTIDE SEQUENCE [GENOMIC DNA]</scope>
    <scope>PROTEIN SEQUENCE OF 1-21 AND 228-237</scope>
    <source>
        <strain>168 / SMY</strain>
    </source>
</reference>
<reference key="2">
    <citation type="journal article" date="1997" name="Microbiology">
        <title>Sequencing and functional annotation of the Bacillus subtilis genes in the 200 kb rrnB-dnaB region.</title>
        <authorList>
            <person name="Lapidus A."/>
            <person name="Galleron N."/>
            <person name="Sorokin A."/>
            <person name="Ehrlich S.D."/>
        </authorList>
    </citation>
    <scope>NUCLEOTIDE SEQUENCE [GENOMIC DNA]</scope>
    <source>
        <strain>168</strain>
    </source>
</reference>
<reference key="3">
    <citation type="journal article" date="1997" name="Nature">
        <title>The complete genome sequence of the Gram-positive bacterium Bacillus subtilis.</title>
        <authorList>
            <person name="Kunst F."/>
            <person name="Ogasawara N."/>
            <person name="Moszer I."/>
            <person name="Albertini A.M."/>
            <person name="Alloni G."/>
            <person name="Azevedo V."/>
            <person name="Bertero M.G."/>
            <person name="Bessieres P."/>
            <person name="Bolotin A."/>
            <person name="Borchert S."/>
            <person name="Borriss R."/>
            <person name="Boursier L."/>
            <person name="Brans A."/>
            <person name="Braun M."/>
            <person name="Brignell S.C."/>
            <person name="Bron S."/>
            <person name="Brouillet S."/>
            <person name="Bruschi C.V."/>
            <person name="Caldwell B."/>
            <person name="Capuano V."/>
            <person name="Carter N.M."/>
            <person name="Choi S.-K."/>
            <person name="Codani J.-J."/>
            <person name="Connerton I.F."/>
            <person name="Cummings N.J."/>
            <person name="Daniel R.A."/>
            <person name="Denizot F."/>
            <person name="Devine K.M."/>
            <person name="Duesterhoeft A."/>
            <person name="Ehrlich S.D."/>
            <person name="Emmerson P.T."/>
            <person name="Entian K.-D."/>
            <person name="Errington J."/>
            <person name="Fabret C."/>
            <person name="Ferrari E."/>
            <person name="Foulger D."/>
            <person name="Fritz C."/>
            <person name="Fujita M."/>
            <person name="Fujita Y."/>
            <person name="Fuma S."/>
            <person name="Galizzi A."/>
            <person name="Galleron N."/>
            <person name="Ghim S.-Y."/>
            <person name="Glaser P."/>
            <person name="Goffeau A."/>
            <person name="Golightly E.J."/>
            <person name="Grandi G."/>
            <person name="Guiseppi G."/>
            <person name="Guy B.J."/>
            <person name="Haga K."/>
            <person name="Haiech J."/>
            <person name="Harwood C.R."/>
            <person name="Henaut A."/>
            <person name="Hilbert H."/>
            <person name="Holsappel S."/>
            <person name="Hosono S."/>
            <person name="Hullo M.-F."/>
            <person name="Itaya M."/>
            <person name="Jones L.-M."/>
            <person name="Joris B."/>
            <person name="Karamata D."/>
            <person name="Kasahara Y."/>
            <person name="Klaerr-Blanchard M."/>
            <person name="Klein C."/>
            <person name="Kobayashi Y."/>
            <person name="Koetter P."/>
            <person name="Koningstein G."/>
            <person name="Krogh S."/>
            <person name="Kumano M."/>
            <person name="Kurita K."/>
            <person name="Lapidus A."/>
            <person name="Lardinois S."/>
            <person name="Lauber J."/>
            <person name="Lazarevic V."/>
            <person name="Lee S.-M."/>
            <person name="Levine A."/>
            <person name="Liu H."/>
            <person name="Masuda S."/>
            <person name="Mauel C."/>
            <person name="Medigue C."/>
            <person name="Medina N."/>
            <person name="Mellado R.P."/>
            <person name="Mizuno M."/>
            <person name="Moestl D."/>
            <person name="Nakai S."/>
            <person name="Noback M."/>
            <person name="Noone D."/>
            <person name="O'Reilly M."/>
            <person name="Ogawa K."/>
            <person name="Ogiwara A."/>
            <person name="Oudega B."/>
            <person name="Park S.-H."/>
            <person name="Parro V."/>
            <person name="Pohl T.M."/>
            <person name="Portetelle D."/>
            <person name="Porwollik S."/>
            <person name="Prescott A.M."/>
            <person name="Presecan E."/>
            <person name="Pujic P."/>
            <person name="Purnelle B."/>
            <person name="Rapoport G."/>
            <person name="Rey M."/>
            <person name="Reynolds S."/>
            <person name="Rieger M."/>
            <person name="Rivolta C."/>
            <person name="Rocha E."/>
            <person name="Roche B."/>
            <person name="Rose M."/>
            <person name="Sadaie Y."/>
            <person name="Sato T."/>
            <person name="Scanlan E."/>
            <person name="Schleich S."/>
            <person name="Schroeter R."/>
            <person name="Scoffone F."/>
            <person name="Sekiguchi J."/>
            <person name="Sekowska A."/>
            <person name="Seror S.J."/>
            <person name="Serror P."/>
            <person name="Shin B.-S."/>
            <person name="Soldo B."/>
            <person name="Sorokin A."/>
            <person name="Tacconi E."/>
            <person name="Takagi T."/>
            <person name="Takahashi H."/>
            <person name="Takemaru K."/>
            <person name="Takeuchi M."/>
            <person name="Tamakoshi A."/>
            <person name="Tanaka T."/>
            <person name="Terpstra P."/>
            <person name="Tognoni A."/>
            <person name="Tosato V."/>
            <person name="Uchiyama S."/>
            <person name="Vandenbol M."/>
            <person name="Vannier F."/>
            <person name="Vassarotti A."/>
            <person name="Viari A."/>
            <person name="Wambutt R."/>
            <person name="Wedler E."/>
            <person name="Wedler H."/>
            <person name="Weitzenegger T."/>
            <person name="Winters P."/>
            <person name="Wipat A."/>
            <person name="Yamamoto H."/>
            <person name="Yamane K."/>
            <person name="Yasumoto K."/>
            <person name="Yata K."/>
            <person name="Yoshida K."/>
            <person name="Yoshikawa H.-F."/>
            <person name="Zumstein E."/>
            <person name="Yoshikawa H."/>
            <person name="Danchin A."/>
        </authorList>
    </citation>
    <scope>NUCLEOTIDE SEQUENCE [LARGE SCALE GENOMIC DNA]</scope>
    <source>
        <strain>168</strain>
    </source>
</reference>
<reference key="4">
    <citation type="journal article" date="2007" name="Mol. Cell. Proteomics">
        <title>The serine/threonine/tyrosine phosphoproteome of the model bacterium Bacillus subtilis.</title>
        <authorList>
            <person name="Macek B."/>
            <person name="Mijakovic I."/>
            <person name="Olsen J.V."/>
            <person name="Gnad F."/>
            <person name="Kumar C."/>
            <person name="Jensen P.R."/>
            <person name="Mann M."/>
        </authorList>
    </citation>
    <scope>PHOSPHORYLATION [LARGE SCALE ANALYSIS] AT SER-284</scope>
    <scope>IDENTIFICATION BY MASS SPECTROMETRY</scope>
    <source>
        <strain>168</strain>
    </source>
</reference>
<dbReference type="EC" id="2.3.3.16"/>
<dbReference type="EMBL" id="U05257">
    <property type="protein sequence ID" value="AAA96341.1"/>
    <property type="molecule type" value="Genomic_DNA"/>
</dbReference>
<dbReference type="EMBL" id="AF008220">
    <property type="protein sequence ID" value="AAC00345.1"/>
    <property type="molecule type" value="Genomic_DNA"/>
</dbReference>
<dbReference type="EMBL" id="AL009126">
    <property type="protein sequence ID" value="CAB14874.1"/>
    <property type="molecule type" value="Genomic_DNA"/>
</dbReference>
<dbReference type="PIR" id="G69600">
    <property type="entry name" value="G69600"/>
</dbReference>
<dbReference type="RefSeq" id="NP_390792.1">
    <property type="nucleotide sequence ID" value="NC_000964.3"/>
</dbReference>
<dbReference type="RefSeq" id="WP_004398810.1">
    <property type="nucleotide sequence ID" value="NZ_OZ025638.1"/>
</dbReference>
<dbReference type="SMR" id="P39120"/>
<dbReference type="FunCoup" id="P39120">
    <property type="interactions" value="587"/>
</dbReference>
<dbReference type="IntAct" id="P39120">
    <property type="interactions" value="1"/>
</dbReference>
<dbReference type="MINT" id="P39120"/>
<dbReference type="STRING" id="224308.BSU29140"/>
<dbReference type="iPTMnet" id="P39120"/>
<dbReference type="jPOST" id="P39120"/>
<dbReference type="PaxDb" id="224308-BSU29140"/>
<dbReference type="EnsemblBacteria" id="CAB14874">
    <property type="protein sequence ID" value="CAB14874"/>
    <property type="gene ID" value="BSU_29140"/>
</dbReference>
<dbReference type="GeneID" id="937381"/>
<dbReference type="KEGG" id="bsu:BSU29140"/>
<dbReference type="PATRIC" id="fig|224308.179.peg.3164"/>
<dbReference type="eggNOG" id="COG0372">
    <property type="taxonomic scope" value="Bacteria"/>
</dbReference>
<dbReference type="InParanoid" id="P39120"/>
<dbReference type="OrthoDB" id="9800864at2"/>
<dbReference type="PhylomeDB" id="P39120"/>
<dbReference type="BioCyc" id="BSUB:BSU29140-MONOMER"/>
<dbReference type="SABIO-RK" id="P39120"/>
<dbReference type="UniPathway" id="UPA00223">
    <property type="reaction ID" value="UER00717"/>
</dbReference>
<dbReference type="Proteomes" id="UP000001570">
    <property type="component" value="Chromosome"/>
</dbReference>
<dbReference type="GO" id="GO:0005737">
    <property type="term" value="C:cytoplasm"/>
    <property type="evidence" value="ECO:0007669"/>
    <property type="project" value="InterPro"/>
</dbReference>
<dbReference type="GO" id="GO:0004108">
    <property type="term" value="F:citrate (Si)-synthase activity"/>
    <property type="evidence" value="ECO:0000318"/>
    <property type="project" value="GO_Central"/>
</dbReference>
<dbReference type="GO" id="GO:0005975">
    <property type="term" value="P:carbohydrate metabolic process"/>
    <property type="evidence" value="ECO:0000318"/>
    <property type="project" value="GO_Central"/>
</dbReference>
<dbReference type="GO" id="GO:0006099">
    <property type="term" value="P:tricarboxylic acid cycle"/>
    <property type="evidence" value="ECO:0000318"/>
    <property type="project" value="GO_Central"/>
</dbReference>
<dbReference type="CDD" id="cd06110">
    <property type="entry name" value="BSuCS-II_like"/>
    <property type="match status" value="1"/>
</dbReference>
<dbReference type="FunFam" id="1.10.230.10:FF:000003">
    <property type="entry name" value="Citrate synthase"/>
    <property type="match status" value="1"/>
</dbReference>
<dbReference type="Gene3D" id="1.10.580.10">
    <property type="entry name" value="Citrate Synthase, domain 1"/>
    <property type="match status" value="1"/>
</dbReference>
<dbReference type="Gene3D" id="1.10.230.10">
    <property type="entry name" value="Cytochrome P450-Terp, domain 2"/>
    <property type="match status" value="1"/>
</dbReference>
<dbReference type="InterPro" id="IPR011278">
    <property type="entry name" value="2-MeCitrate/Citrate_synth_II"/>
</dbReference>
<dbReference type="InterPro" id="IPR016142">
    <property type="entry name" value="Citrate_synth-like_lrg_a-sub"/>
</dbReference>
<dbReference type="InterPro" id="IPR016143">
    <property type="entry name" value="Citrate_synth-like_sm_a-sub"/>
</dbReference>
<dbReference type="InterPro" id="IPR002020">
    <property type="entry name" value="Citrate_synthase"/>
</dbReference>
<dbReference type="InterPro" id="IPR019810">
    <property type="entry name" value="Citrate_synthase_AS"/>
</dbReference>
<dbReference type="InterPro" id="IPR024176">
    <property type="entry name" value="Citrate_synthase_bac-typ"/>
</dbReference>
<dbReference type="InterPro" id="IPR036969">
    <property type="entry name" value="Citrate_synthase_sf"/>
</dbReference>
<dbReference type="NCBIfam" id="TIGR01800">
    <property type="entry name" value="cit_synth_II"/>
    <property type="match status" value="1"/>
</dbReference>
<dbReference type="NCBIfam" id="NF010637">
    <property type="entry name" value="PRK14034.1"/>
    <property type="match status" value="1"/>
</dbReference>
<dbReference type="NCBIfam" id="NF010638">
    <property type="entry name" value="PRK14035.1"/>
    <property type="match status" value="1"/>
</dbReference>
<dbReference type="PANTHER" id="PTHR11739">
    <property type="entry name" value="CITRATE SYNTHASE"/>
    <property type="match status" value="1"/>
</dbReference>
<dbReference type="PANTHER" id="PTHR11739:SF4">
    <property type="entry name" value="CITRATE SYNTHASE, PEROXISOMAL"/>
    <property type="match status" value="1"/>
</dbReference>
<dbReference type="Pfam" id="PF00285">
    <property type="entry name" value="Citrate_synt"/>
    <property type="match status" value="1"/>
</dbReference>
<dbReference type="PIRSF" id="PIRSF001369">
    <property type="entry name" value="Citrate_synth"/>
    <property type="match status" value="1"/>
</dbReference>
<dbReference type="PRINTS" id="PR00143">
    <property type="entry name" value="CITRTSNTHASE"/>
</dbReference>
<dbReference type="SUPFAM" id="SSF48256">
    <property type="entry name" value="Citrate synthase"/>
    <property type="match status" value="1"/>
</dbReference>
<dbReference type="PROSITE" id="PS00480">
    <property type="entry name" value="CITRATE_SYNTHASE"/>
    <property type="match status" value="1"/>
</dbReference>
<proteinExistence type="evidence at protein level"/>
<organism>
    <name type="scientific">Bacillus subtilis (strain 168)</name>
    <dbReference type="NCBI Taxonomy" id="224308"/>
    <lineage>
        <taxon>Bacteria</taxon>
        <taxon>Bacillati</taxon>
        <taxon>Bacillota</taxon>
        <taxon>Bacilli</taxon>
        <taxon>Bacillales</taxon>
        <taxon>Bacillaceae</taxon>
        <taxon>Bacillus</taxon>
    </lineage>
</organism>
<sequence>MTATRGLEGVVATTSSVSSIIDDTLTYVGYDIDDLTENASFEEIIYLLWHLRLPNKKELEELKQQLAKEAAVPQEIIEHFKSYSLENVHPMAALRTAISLLGLLDSEADTMNPEANYRKAIRLQAKVPGLVAAFSRIRKGLEPVEPREDYGIAENFLYTLNGEEPSPIEVEAFNKALILHADHELNASTFTARVCVATLSDIYSGITAAIGALKGPLHGGANEGVMKMLTEIGEVENAEPYIRAKLEKKEKIMGFGHRVYKHGDPRAKHLKEMSKRLTNLTGESKWYEMSIRIEDIVTSEKKLPPNVDFYSASVYHSLGIDHDLFTPIFAVSRMSGWLAHILEQYDNNRLIRPRADYTGPDKQKFVPIEERA</sequence>
<name>CISY2_BACSU</name>
<protein>
    <recommendedName>
        <fullName>Citrate synthase 2</fullName>
        <ecNumber>2.3.3.16</ecNumber>
    </recommendedName>
    <alternativeName>
        <fullName>Citrate synthase II</fullName>
    </alternativeName>
</protein>
<evidence type="ECO:0000255" key="1">
    <source>
        <dbReference type="PROSITE-ProRule" id="PRU10117"/>
    </source>
</evidence>
<evidence type="ECO:0000269" key="2">
    <source>
    </source>
</evidence>
<evidence type="ECO:0000305" key="3"/>